<proteinExistence type="evidence at protein level"/>
<organism>
    <name type="scientific">Paralithodes camtschaticus</name>
    <name type="common">Red king crab</name>
    <name type="synonym">Maja camtschatica</name>
    <dbReference type="NCBI Taxonomy" id="6741"/>
    <lineage>
        <taxon>Eukaryota</taxon>
        <taxon>Metazoa</taxon>
        <taxon>Ecdysozoa</taxon>
        <taxon>Arthropoda</taxon>
        <taxon>Crustacea</taxon>
        <taxon>Multicrustacea</taxon>
        <taxon>Malacostraca</taxon>
        <taxon>Eumalacostraca</taxon>
        <taxon>Eucarida</taxon>
        <taxon>Decapoda</taxon>
        <taxon>Pleocyemata</taxon>
        <taxon>Anomura</taxon>
        <taxon>Paguroidea</taxon>
        <taxon>Lithodidae</taxon>
        <taxon>Paralithodes</taxon>
    </lineage>
</organism>
<sequence length="20" mass="2088">IVGGQEASPGSWPXQVGLFF</sequence>
<keyword id="KW-0177">Collagen degradation</keyword>
<keyword id="KW-0903">Direct protein sequencing</keyword>
<keyword id="KW-0378">Hydrolase</keyword>
<keyword id="KW-0645">Protease</keyword>
<keyword id="KW-0720">Serine protease</keyword>
<evidence type="ECO:0000255" key="1">
    <source>
        <dbReference type="PROSITE-ProRule" id="PRU00274"/>
    </source>
</evidence>
<comment type="function">
    <text>This enzyme is a serine protease capable of degrading the native triple helix of collagen.</text>
</comment>
<comment type="catalytic activity">
    <reaction>
        <text>Hydrolysis of proteins, with broad specificity for peptide bonds. Native collagen is cleaved about 75% of the length of the molecule from the N-terminus. Low activity on small molecule substrates of both trypsin and chymotrypsin.</text>
        <dbReference type="EC" id="3.4.21.32"/>
    </reaction>
</comment>
<comment type="similarity">
    <text evidence="1">Belongs to the peptidase S1 family.</text>
</comment>
<reference key="1">
    <citation type="journal article" date="1990" name="Biochem. Biophys. Res. Commun.">
        <title>The isolation and properties of collagenolytic proteases from crab hepatopancreas.</title>
        <authorList>
            <person name="Klimova O.A."/>
            <person name="Borukhov S.I."/>
            <person name="Solovyeva N.I."/>
            <person name="Balaevskaya T.O."/>
            <person name="Strongin A.Y."/>
        </authorList>
    </citation>
    <scope>PROTEIN SEQUENCE</scope>
    <source>
        <tissue>Hepatopancreas</tissue>
    </source>
</reference>
<feature type="chain" id="PRO_0000088666" description="Collagenolytic protease 28 kDa">
    <location>
        <begin position="1"/>
        <end position="20" status="greater than"/>
    </location>
</feature>
<feature type="domain" description="Peptidase S1" evidence="1">
    <location>
        <begin position="1"/>
        <end position="20" status="greater than"/>
    </location>
</feature>
<feature type="non-terminal residue">
    <location>
        <position position="20"/>
    </location>
</feature>
<dbReference type="EC" id="3.4.21.32"/>
<dbReference type="PIR" id="A34817">
    <property type="entry name" value="A34817"/>
</dbReference>
<dbReference type="MEROPS" id="S01.122"/>
<dbReference type="GO" id="GO:0008236">
    <property type="term" value="F:serine-type peptidase activity"/>
    <property type="evidence" value="ECO:0007669"/>
    <property type="project" value="UniProtKB-KW"/>
</dbReference>
<dbReference type="GO" id="GO:0030574">
    <property type="term" value="P:collagen catabolic process"/>
    <property type="evidence" value="ECO:0007669"/>
    <property type="project" value="UniProtKB-KW"/>
</dbReference>
<dbReference type="GO" id="GO:0006508">
    <property type="term" value="P:proteolysis"/>
    <property type="evidence" value="ECO:0007669"/>
    <property type="project" value="UniProtKB-KW"/>
</dbReference>
<dbReference type="Gene3D" id="2.40.10.10">
    <property type="entry name" value="Trypsin-like serine proteases"/>
    <property type="match status" value="1"/>
</dbReference>
<dbReference type="InterPro" id="IPR043504">
    <property type="entry name" value="Peptidase_S1_PA_chymotrypsin"/>
</dbReference>
<protein>
    <recommendedName>
        <fullName>Collagenolytic protease 28 kDa</fullName>
        <ecNumber>3.4.21.32</ecNumber>
    </recommendedName>
</protein>
<accession>P20731</accession>
<name>COG1_PARCM</name>